<comment type="function">
    <text evidence="1">Catalyzes the stereoinversion of LL-2,6-diaminopimelate (L,L-DAP) to meso-diaminopimelate (meso-DAP), a precursor of L-lysine and an essential component of the bacterial peptidoglycan.</text>
</comment>
<comment type="catalytic activity">
    <reaction evidence="1">
        <text>(2S,6S)-2,6-diaminopimelate = meso-2,6-diaminopimelate</text>
        <dbReference type="Rhea" id="RHEA:15393"/>
        <dbReference type="ChEBI" id="CHEBI:57609"/>
        <dbReference type="ChEBI" id="CHEBI:57791"/>
        <dbReference type="EC" id="5.1.1.7"/>
    </reaction>
</comment>
<comment type="pathway">
    <text evidence="1">Amino-acid biosynthesis; L-lysine biosynthesis via DAP pathway; DL-2,6-diaminopimelate from LL-2,6-diaminopimelate: step 1/1.</text>
</comment>
<comment type="subunit">
    <text evidence="1">Homodimer.</text>
</comment>
<comment type="subcellular location">
    <subcellularLocation>
        <location evidence="1">Cytoplasm</location>
    </subcellularLocation>
</comment>
<comment type="similarity">
    <text evidence="1">Belongs to the diaminopimelate epimerase family.</text>
</comment>
<name>DAPF_YERE8</name>
<feature type="chain" id="PRO_1000011986" description="Diaminopimelate epimerase">
    <location>
        <begin position="1"/>
        <end position="274"/>
    </location>
</feature>
<feature type="active site" description="Proton donor" evidence="1">
    <location>
        <position position="73"/>
    </location>
</feature>
<feature type="active site" description="Proton acceptor" evidence="1">
    <location>
        <position position="217"/>
    </location>
</feature>
<feature type="binding site" evidence="1">
    <location>
        <position position="11"/>
    </location>
    <ligand>
        <name>substrate</name>
    </ligand>
</feature>
<feature type="binding site" evidence="1">
    <location>
        <position position="44"/>
    </location>
    <ligand>
        <name>substrate</name>
    </ligand>
</feature>
<feature type="binding site" evidence="1">
    <location>
        <position position="64"/>
    </location>
    <ligand>
        <name>substrate</name>
    </ligand>
</feature>
<feature type="binding site" evidence="1">
    <location>
        <begin position="74"/>
        <end position="75"/>
    </location>
    <ligand>
        <name>substrate</name>
    </ligand>
</feature>
<feature type="binding site" evidence="1">
    <location>
        <position position="157"/>
    </location>
    <ligand>
        <name>substrate</name>
    </ligand>
</feature>
<feature type="binding site" evidence="1">
    <location>
        <position position="190"/>
    </location>
    <ligand>
        <name>substrate</name>
    </ligand>
</feature>
<feature type="binding site" evidence="1">
    <location>
        <begin position="208"/>
        <end position="209"/>
    </location>
    <ligand>
        <name>substrate</name>
    </ligand>
</feature>
<feature type="binding site" evidence="1">
    <location>
        <begin position="218"/>
        <end position="219"/>
    </location>
    <ligand>
        <name>substrate</name>
    </ligand>
</feature>
<feature type="site" description="Could be important to modulate the pK values of the two catalytic cysteine residues" evidence="1">
    <location>
        <position position="159"/>
    </location>
</feature>
<feature type="site" description="Could be important to modulate the pK values of the two catalytic cysteine residues" evidence="1">
    <location>
        <position position="208"/>
    </location>
</feature>
<feature type="site" description="Important for dimerization" evidence="1">
    <location>
        <position position="268"/>
    </location>
</feature>
<proteinExistence type="inferred from homology"/>
<accession>A1JI90</accession>
<dbReference type="EC" id="5.1.1.7" evidence="1"/>
<dbReference type="EMBL" id="AM286415">
    <property type="protein sequence ID" value="CAL10328.1"/>
    <property type="molecule type" value="Genomic_DNA"/>
</dbReference>
<dbReference type="RefSeq" id="WP_005176172.1">
    <property type="nucleotide sequence ID" value="NC_008800.1"/>
</dbReference>
<dbReference type="RefSeq" id="YP_001004580.1">
    <property type="nucleotide sequence ID" value="NC_008800.1"/>
</dbReference>
<dbReference type="SMR" id="A1JI90"/>
<dbReference type="KEGG" id="yen:YE0192"/>
<dbReference type="PATRIC" id="fig|393305.7.peg.282"/>
<dbReference type="eggNOG" id="COG0253">
    <property type="taxonomic scope" value="Bacteria"/>
</dbReference>
<dbReference type="HOGENOM" id="CLU_053306_1_1_6"/>
<dbReference type="OrthoDB" id="9805408at2"/>
<dbReference type="UniPathway" id="UPA00034">
    <property type="reaction ID" value="UER00025"/>
</dbReference>
<dbReference type="Proteomes" id="UP000000642">
    <property type="component" value="Chromosome"/>
</dbReference>
<dbReference type="GO" id="GO:0005829">
    <property type="term" value="C:cytosol"/>
    <property type="evidence" value="ECO:0007669"/>
    <property type="project" value="TreeGrafter"/>
</dbReference>
<dbReference type="GO" id="GO:0008837">
    <property type="term" value="F:diaminopimelate epimerase activity"/>
    <property type="evidence" value="ECO:0007669"/>
    <property type="project" value="UniProtKB-UniRule"/>
</dbReference>
<dbReference type="GO" id="GO:0009089">
    <property type="term" value="P:lysine biosynthetic process via diaminopimelate"/>
    <property type="evidence" value="ECO:0007669"/>
    <property type="project" value="UniProtKB-UniRule"/>
</dbReference>
<dbReference type="FunFam" id="3.10.310.10:FF:000001">
    <property type="entry name" value="Diaminopimelate epimerase"/>
    <property type="match status" value="1"/>
</dbReference>
<dbReference type="FunFam" id="3.10.310.10:FF:000002">
    <property type="entry name" value="Diaminopimelate epimerase"/>
    <property type="match status" value="1"/>
</dbReference>
<dbReference type="Gene3D" id="3.10.310.10">
    <property type="entry name" value="Diaminopimelate Epimerase, Chain A, domain 1"/>
    <property type="match status" value="2"/>
</dbReference>
<dbReference type="HAMAP" id="MF_00197">
    <property type="entry name" value="DAP_epimerase"/>
    <property type="match status" value="1"/>
</dbReference>
<dbReference type="InterPro" id="IPR018510">
    <property type="entry name" value="DAP_epimerase_AS"/>
</dbReference>
<dbReference type="InterPro" id="IPR001653">
    <property type="entry name" value="DAP_epimerase_DapF"/>
</dbReference>
<dbReference type="NCBIfam" id="TIGR00652">
    <property type="entry name" value="DapF"/>
    <property type="match status" value="1"/>
</dbReference>
<dbReference type="PANTHER" id="PTHR31689:SF0">
    <property type="entry name" value="DIAMINOPIMELATE EPIMERASE"/>
    <property type="match status" value="1"/>
</dbReference>
<dbReference type="PANTHER" id="PTHR31689">
    <property type="entry name" value="DIAMINOPIMELATE EPIMERASE, CHLOROPLASTIC"/>
    <property type="match status" value="1"/>
</dbReference>
<dbReference type="Pfam" id="PF01678">
    <property type="entry name" value="DAP_epimerase"/>
    <property type="match status" value="2"/>
</dbReference>
<dbReference type="SUPFAM" id="SSF54506">
    <property type="entry name" value="Diaminopimelate epimerase-like"/>
    <property type="match status" value="1"/>
</dbReference>
<dbReference type="PROSITE" id="PS01326">
    <property type="entry name" value="DAP_EPIMERASE"/>
    <property type="match status" value="1"/>
</dbReference>
<keyword id="KW-0028">Amino-acid biosynthesis</keyword>
<keyword id="KW-0963">Cytoplasm</keyword>
<keyword id="KW-0413">Isomerase</keyword>
<keyword id="KW-0457">Lysine biosynthesis</keyword>
<sequence>MQFSKMHGLGNDFMVVDAVTQNVYFSPELIRRLADRHTGVGFDQMLVVEPPYDPELDFHYRIFNADGSEVSQCGNGARCFARFVRLKGLTNKRDISVSTQTGRMILSVTEDELVCVNMGEPNFEPQSVPFRAAKAEKTYILRAAEHTVLCGVVSMGNPHCVMQVDDVSVANVALLGPVLESHERFPERANIGFMQVVSREHIRLRVYERGAGETQACGSGACAAVAVGIQQELLGEEVHVELPGGSLHISWKGPGHPLYMTGPATHVYDGFIHL</sequence>
<evidence type="ECO:0000255" key="1">
    <source>
        <dbReference type="HAMAP-Rule" id="MF_00197"/>
    </source>
</evidence>
<gene>
    <name evidence="1" type="primary">dapF</name>
    <name type="ordered locus">YE0192</name>
</gene>
<reference key="1">
    <citation type="journal article" date="2006" name="PLoS Genet.">
        <title>The complete genome sequence and comparative genome analysis of the high pathogenicity Yersinia enterocolitica strain 8081.</title>
        <authorList>
            <person name="Thomson N.R."/>
            <person name="Howard S."/>
            <person name="Wren B.W."/>
            <person name="Holden M.T.G."/>
            <person name="Crossman L."/>
            <person name="Challis G.L."/>
            <person name="Churcher C."/>
            <person name="Mungall K."/>
            <person name="Brooks K."/>
            <person name="Chillingworth T."/>
            <person name="Feltwell T."/>
            <person name="Abdellah Z."/>
            <person name="Hauser H."/>
            <person name="Jagels K."/>
            <person name="Maddison M."/>
            <person name="Moule S."/>
            <person name="Sanders M."/>
            <person name="Whitehead S."/>
            <person name="Quail M.A."/>
            <person name="Dougan G."/>
            <person name="Parkhill J."/>
            <person name="Prentice M.B."/>
        </authorList>
    </citation>
    <scope>NUCLEOTIDE SEQUENCE [LARGE SCALE GENOMIC DNA]</scope>
    <source>
        <strain>NCTC 13174 / 8081</strain>
    </source>
</reference>
<organism>
    <name type="scientific">Yersinia enterocolitica serotype O:8 / biotype 1B (strain NCTC 13174 / 8081)</name>
    <dbReference type="NCBI Taxonomy" id="393305"/>
    <lineage>
        <taxon>Bacteria</taxon>
        <taxon>Pseudomonadati</taxon>
        <taxon>Pseudomonadota</taxon>
        <taxon>Gammaproteobacteria</taxon>
        <taxon>Enterobacterales</taxon>
        <taxon>Yersiniaceae</taxon>
        <taxon>Yersinia</taxon>
    </lineage>
</organism>
<protein>
    <recommendedName>
        <fullName evidence="1">Diaminopimelate epimerase</fullName>
        <shortName evidence="1">DAP epimerase</shortName>
        <ecNumber evidence="1">5.1.1.7</ecNumber>
    </recommendedName>
    <alternativeName>
        <fullName evidence="1">PLP-independent amino acid racemase</fullName>
    </alternativeName>
</protein>